<evidence type="ECO:0000269" key="1">
    <source ref="1"/>
</evidence>
<evidence type="ECO:0000269" key="2">
    <source ref="2"/>
</evidence>
<evidence type="ECO:0000305" key="3"/>
<evidence type="ECO:0007829" key="4">
    <source>
        <dbReference type="PDB" id="2B9K"/>
    </source>
</evidence>
<protein>
    <recommendedName>
        <fullName>Antimicrobial peptide LCI</fullName>
    </recommendedName>
</protein>
<sequence length="47" mass="5464">AIKLVQSPNGNFAASFVLDGTKWIFKSKYYDSSKGYWVGIYEVWDRK</sequence>
<organism>
    <name type="scientific">Bacillus subtilis</name>
    <dbReference type="NCBI Taxonomy" id="1423"/>
    <lineage>
        <taxon>Bacteria</taxon>
        <taxon>Bacillati</taxon>
        <taxon>Bacillota</taxon>
        <taxon>Bacilli</taxon>
        <taxon>Bacillales</taxon>
        <taxon>Bacillaceae</taxon>
        <taxon>Bacillus</taxon>
    </lineage>
</organism>
<reference evidence="3" key="1">
    <citation type="submission" date="1999-12" db="UniProtKB">
        <authorList>
            <person name="Xu Q."/>
        </authorList>
    </citation>
    <scope>PROTEIN SEQUENCE</scope>
    <scope>SUBCELLULAR LOCATION</scope>
    <source>
        <strain>A014</strain>
    </source>
</reference>
<reference evidence="3" key="2">
    <citation type="journal article" date="1990" name="Rice Genet. Newsl.">
        <title>Characterization of an anti-rice bacterial blight polypeptide LCI.</title>
        <authorList>
            <person name="Liu J.-Y."/>
            <person name="Pan N.-S."/>
            <person name="Chen Z.-L."/>
        </authorList>
    </citation>
    <scope>PROTEIN SEQUENCE OF 1-27</scope>
    <scope>FUNCTION</scope>
    <scope>STABILITY</scope>
    <source>
        <strain evidence="2">A014</strain>
    </source>
</reference>
<proteinExistence type="evidence at protein level"/>
<keyword id="KW-0002">3D-structure</keyword>
<keyword id="KW-0044">Antibiotic</keyword>
<keyword id="KW-0929">Antimicrobial</keyword>
<keyword id="KW-0903">Direct protein sequencing</keyword>
<keyword id="KW-0964">Secreted</keyword>
<comment type="function">
    <text evidence="2">Has antibacterial activity against X.oryzae pv oryzae and R.solanacearum, but not E.coli or P.carotovorum subsp carotovorum. May bind DNA or mRNA.</text>
</comment>
<comment type="subcellular location">
    <subcellularLocation>
        <location evidence="1">Secreted</location>
    </subcellularLocation>
</comment>
<comment type="miscellaneous">
    <text evidence="2">Heat stable. Resistant to proteolysis by tryspin and pepsin, but susceptible to pronase E and proteinase K.</text>
</comment>
<name>BLCI_BACIU</name>
<dbReference type="PDB" id="2B9K">
    <property type="method" value="NMR"/>
    <property type="chains" value="A=1-47"/>
</dbReference>
<dbReference type="PDBsum" id="2B9K"/>
<dbReference type="SMR" id="P82243"/>
<dbReference type="EvolutionaryTrace" id="P82243"/>
<dbReference type="GO" id="GO:0005576">
    <property type="term" value="C:extracellular region"/>
    <property type="evidence" value="ECO:0007669"/>
    <property type="project" value="UniProtKB-SubCell"/>
</dbReference>
<dbReference type="GO" id="GO:0042742">
    <property type="term" value="P:defense response to bacterium"/>
    <property type="evidence" value="ECO:0007669"/>
    <property type="project" value="UniProtKB-KW"/>
</dbReference>
<dbReference type="Gene3D" id="2.20.20.70">
    <property type="match status" value="1"/>
</dbReference>
<dbReference type="InterPro" id="IPR053765">
    <property type="entry name" value="Antimicro_NucAcidBind_sf"/>
</dbReference>
<dbReference type="InterPro" id="IPR020976">
    <property type="entry name" value="Antimicrobial_lci"/>
</dbReference>
<dbReference type="Pfam" id="PF12197">
    <property type="entry name" value="lci"/>
    <property type="match status" value="1"/>
</dbReference>
<accession>P82243</accession>
<feature type="chain" id="PRO_0000064937" description="Antimicrobial peptide LCI">
    <location>
        <begin position="1"/>
        <end position="47"/>
    </location>
</feature>
<feature type="strand" evidence="4">
    <location>
        <begin position="3"/>
        <end position="7"/>
    </location>
</feature>
<feature type="strand" evidence="4">
    <location>
        <begin position="15"/>
        <end position="18"/>
    </location>
</feature>
<feature type="strand" evidence="4">
    <location>
        <begin position="21"/>
        <end position="30"/>
    </location>
</feature>
<feature type="turn" evidence="4">
    <location>
        <begin position="32"/>
        <end position="34"/>
    </location>
</feature>
<feature type="strand" evidence="4">
    <location>
        <begin position="35"/>
        <end position="43"/>
    </location>
</feature>